<comment type="function">
    <text evidence="1">Binds to 23S rRNA. One of the proteins that surrounds the polypeptide exit tunnel on the outside of the ribosome.</text>
</comment>
<comment type="subunit">
    <text evidence="1">Part of the 50S ribosomal subunit. Contacts protein L29.</text>
</comment>
<comment type="similarity">
    <text evidence="1">Belongs to the universal ribosomal protein uL23 family.</text>
</comment>
<name>RL23_METS3</name>
<keyword id="KW-0687">Ribonucleoprotein</keyword>
<keyword id="KW-0689">Ribosomal protein</keyword>
<keyword id="KW-0694">RNA-binding</keyword>
<keyword id="KW-0699">rRNA-binding</keyword>
<accession>A5UL87</accession>
<reference key="1">
    <citation type="journal article" date="2007" name="Proc. Natl. Acad. Sci. U.S.A.">
        <title>Genomic and metabolic adaptations of Methanobrevibacter smithii to the human gut.</title>
        <authorList>
            <person name="Samuel B.S."/>
            <person name="Hansen E.E."/>
            <person name="Manchester J.K."/>
            <person name="Coutinho P.M."/>
            <person name="Henrissat B."/>
            <person name="Fulton R."/>
            <person name="Latreille P."/>
            <person name="Kim K."/>
            <person name="Wilson R.K."/>
            <person name="Gordon J.I."/>
        </authorList>
    </citation>
    <scope>NUCLEOTIDE SEQUENCE [LARGE SCALE GENOMIC DNA]</scope>
    <source>
        <strain>ATCC 35061 / DSM 861 / OCM 144 / PS</strain>
    </source>
</reference>
<organism>
    <name type="scientific">Methanobrevibacter smithii (strain ATCC 35061 / DSM 861 / OCM 144 / PS)</name>
    <dbReference type="NCBI Taxonomy" id="420247"/>
    <lineage>
        <taxon>Archaea</taxon>
        <taxon>Methanobacteriati</taxon>
        <taxon>Methanobacteriota</taxon>
        <taxon>Methanomada group</taxon>
        <taxon>Methanobacteria</taxon>
        <taxon>Methanobacteriales</taxon>
        <taxon>Methanobacteriaceae</taxon>
        <taxon>Methanobrevibacter</taxon>
    </lineage>
</organism>
<feature type="chain" id="PRO_1000068109" description="Large ribosomal subunit protein uL23">
    <location>
        <begin position="1"/>
        <end position="86"/>
    </location>
</feature>
<dbReference type="EMBL" id="CP000678">
    <property type="protein sequence ID" value="ABQ86965.1"/>
    <property type="molecule type" value="Genomic_DNA"/>
</dbReference>
<dbReference type="RefSeq" id="WP_004033205.1">
    <property type="nucleotide sequence ID" value="NZ_CP117965.1"/>
</dbReference>
<dbReference type="SMR" id="A5UL87"/>
<dbReference type="STRING" id="420247.Msm_0760"/>
<dbReference type="EnsemblBacteria" id="ABQ86965">
    <property type="protein sequence ID" value="ABQ86965"/>
    <property type="gene ID" value="Msm_0760"/>
</dbReference>
<dbReference type="KEGG" id="msi:Msm_0760"/>
<dbReference type="PATRIC" id="fig|420247.28.peg.757"/>
<dbReference type="eggNOG" id="arCOG04072">
    <property type="taxonomic scope" value="Archaea"/>
</dbReference>
<dbReference type="HOGENOM" id="CLU_037562_4_2_2"/>
<dbReference type="Proteomes" id="UP000001992">
    <property type="component" value="Chromosome"/>
</dbReference>
<dbReference type="GO" id="GO:1990904">
    <property type="term" value="C:ribonucleoprotein complex"/>
    <property type="evidence" value="ECO:0007669"/>
    <property type="project" value="UniProtKB-KW"/>
</dbReference>
<dbReference type="GO" id="GO:0005840">
    <property type="term" value="C:ribosome"/>
    <property type="evidence" value="ECO:0007669"/>
    <property type="project" value="UniProtKB-KW"/>
</dbReference>
<dbReference type="GO" id="GO:0019843">
    <property type="term" value="F:rRNA binding"/>
    <property type="evidence" value="ECO:0007669"/>
    <property type="project" value="UniProtKB-UniRule"/>
</dbReference>
<dbReference type="GO" id="GO:0003735">
    <property type="term" value="F:structural constituent of ribosome"/>
    <property type="evidence" value="ECO:0007669"/>
    <property type="project" value="InterPro"/>
</dbReference>
<dbReference type="GO" id="GO:0006412">
    <property type="term" value="P:translation"/>
    <property type="evidence" value="ECO:0007669"/>
    <property type="project" value="UniProtKB-UniRule"/>
</dbReference>
<dbReference type="FunFam" id="3.30.70.330:FF:000532">
    <property type="entry name" value="50S ribosomal protein L23"/>
    <property type="match status" value="1"/>
</dbReference>
<dbReference type="Gene3D" id="3.30.70.330">
    <property type="match status" value="1"/>
</dbReference>
<dbReference type="HAMAP" id="MF_01369_A">
    <property type="entry name" value="Ribosomal_uL23_A"/>
    <property type="match status" value="1"/>
</dbReference>
<dbReference type="InterPro" id="IPR012677">
    <property type="entry name" value="Nucleotide-bd_a/b_plait_sf"/>
</dbReference>
<dbReference type="InterPro" id="IPR019985">
    <property type="entry name" value="Ribosomal_uL23"/>
</dbReference>
<dbReference type="InterPro" id="IPR013025">
    <property type="entry name" value="Ribosomal_uL23-like"/>
</dbReference>
<dbReference type="InterPro" id="IPR012678">
    <property type="entry name" value="Ribosomal_uL23/eL15/eS24_sf"/>
</dbReference>
<dbReference type="NCBIfam" id="NF011118">
    <property type="entry name" value="PRK14548.1"/>
    <property type="match status" value="1"/>
</dbReference>
<dbReference type="NCBIfam" id="TIGR03636">
    <property type="entry name" value="uL23_arch"/>
    <property type="match status" value="1"/>
</dbReference>
<dbReference type="PANTHER" id="PTHR11620">
    <property type="entry name" value="60S RIBOSOMAL PROTEIN L23A"/>
    <property type="match status" value="1"/>
</dbReference>
<dbReference type="Pfam" id="PF00276">
    <property type="entry name" value="Ribosomal_L23"/>
    <property type="match status" value="1"/>
</dbReference>
<dbReference type="SUPFAM" id="SSF54189">
    <property type="entry name" value="Ribosomal proteins S24e, L23 and L15e"/>
    <property type="match status" value="1"/>
</dbReference>
<protein>
    <recommendedName>
        <fullName evidence="1">Large ribosomal subunit protein uL23</fullName>
    </recommendedName>
    <alternativeName>
        <fullName evidence="2">50S ribosomal protein L23</fullName>
    </alternativeName>
</protein>
<proteinExistence type="inferred from homology"/>
<evidence type="ECO:0000255" key="1">
    <source>
        <dbReference type="HAMAP-Rule" id="MF_01369"/>
    </source>
</evidence>
<evidence type="ECO:0000305" key="2"/>
<sequence>MDSYSIIIKPHVTEKTMNLIDKNNEITFVVKRDANKGQIKRAFEELYEEKVARVTTHITPRGNKVAFIKLVEEEMAEELAVKIGVF</sequence>
<gene>
    <name evidence="1" type="primary">rpl23</name>
    <name type="ordered locus">Msm_0760</name>
</gene>